<protein>
    <recommendedName>
        <fullName evidence="1">Translation initiation factor IF-1, chloroplastic</fullName>
    </recommendedName>
</protein>
<organism>
    <name type="scientific">Nandina domestica</name>
    <name type="common">Heavenly bamboo</name>
    <dbReference type="NCBI Taxonomy" id="41776"/>
    <lineage>
        <taxon>Eukaryota</taxon>
        <taxon>Viridiplantae</taxon>
        <taxon>Streptophyta</taxon>
        <taxon>Embryophyta</taxon>
        <taxon>Tracheophyta</taxon>
        <taxon>Spermatophyta</taxon>
        <taxon>Magnoliopsida</taxon>
        <taxon>Ranunculales</taxon>
        <taxon>Berberidaceae</taxon>
        <taxon>Nandinoideae</taxon>
        <taxon>Nandineae</taxon>
        <taxon>Nandina</taxon>
    </lineage>
</organism>
<reference key="1">
    <citation type="journal article" date="2006" name="BMC Plant Biol.">
        <title>Rapid and accurate pyrosequencing of angiosperm plastid genomes.</title>
        <authorList>
            <person name="Moore M.J."/>
            <person name="Dhingra A."/>
            <person name="Soltis P.S."/>
            <person name="Shaw R."/>
            <person name="Farmerie W.G."/>
            <person name="Folta K.M."/>
            <person name="Soltis D.E."/>
        </authorList>
    </citation>
    <scope>NUCLEOTIDE SEQUENCE [LARGE SCALE GENOMIC DNA]</scope>
</reference>
<keyword id="KW-0150">Chloroplast</keyword>
<keyword id="KW-0396">Initiation factor</keyword>
<keyword id="KW-0934">Plastid</keyword>
<keyword id="KW-0648">Protein biosynthesis</keyword>
<keyword id="KW-0694">RNA-binding</keyword>
<keyword id="KW-0699">rRNA-binding</keyword>
<evidence type="ECO:0000255" key="1">
    <source>
        <dbReference type="HAMAP-Rule" id="MF_00075"/>
    </source>
</evidence>
<name>IF1C_NANDO</name>
<proteinExistence type="inferred from homology"/>
<geneLocation type="chloroplast"/>
<sequence length="77" mass="9164">MKEQKWIHEGLITESLPNGMFRVRLDNEDLILGYVSGRIRRSFIRILPGDRVKIEVSRYDSTRGRIIYRLRNKDSND</sequence>
<accession>Q09FS6</accession>
<comment type="function">
    <text evidence="1">One of the essential components for the initiation of protein synthesis. Stabilizes the binding of IF-2 and IF-3 on the 30S subunit to which N-formylmethionyl-tRNA(fMet) subsequently binds. Helps modulate mRNA selection, yielding the 30S pre-initiation complex (PIC). Upon addition of the 50S ribosomal subunit IF-1, IF-2 and IF-3 are released leaving the mature 70S translation initiation complex.</text>
</comment>
<comment type="subunit">
    <text evidence="1">Component of the 30S ribosomal translation pre-initiation complex which assembles on the 30S ribosome in the order IF-2 and IF-3, IF-1 and N-formylmethionyl-tRNA(fMet); mRNA recruitment can occur at any time during PIC assembly.</text>
</comment>
<comment type="subcellular location">
    <subcellularLocation>
        <location evidence="1">Plastid</location>
        <location evidence="1">Chloroplast</location>
    </subcellularLocation>
</comment>
<comment type="similarity">
    <text evidence="1">Belongs to the IF-1 family.</text>
</comment>
<dbReference type="EMBL" id="DQ923117">
    <property type="protein sequence ID" value="ABI49899.1"/>
    <property type="molecule type" value="Genomic_DNA"/>
</dbReference>
<dbReference type="RefSeq" id="YP_740685.1">
    <property type="nucleotide sequence ID" value="NC_008336.1"/>
</dbReference>
<dbReference type="SMR" id="Q09FS6"/>
<dbReference type="GeneID" id="4271696"/>
<dbReference type="GO" id="GO:0009507">
    <property type="term" value="C:chloroplast"/>
    <property type="evidence" value="ECO:0007669"/>
    <property type="project" value="UniProtKB-SubCell"/>
</dbReference>
<dbReference type="GO" id="GO:0005829">
    <property type="term" value="C:cytosol"/>
    <property type="evidence" value="ECO:0007669"/>
    <property type="project" value="TreeGrafter"/>
</dbReference>
<dbReference type="GO" id="GO:0043022">
    <property type="term" value="F:ribosome binding"/>
    <property type="evidence" value="ECO:0007669"/>
    <property type="project" value="UniProtKB-UniRule"/>
</dbReference>
<dbReference type="GO" id="GO:0019843">
    <property type="term" value="F:rRNA binding"/>
    <property type="evidence" value="ECO:0007669"/>
    <property type="project" value="UniProtKB-UniRule"/>
</dbReference>
<dbReference type="GO" id="GO:0003743">
    <property type="term" value="F:translation initiation factor activity"/>
    <property type="evidence" value="ECO:0007669"/>
    <property type="project" value="UniProtKB-UniRule"/>
</dbReference>
<dbReference type="CDD" id="cd04451">
    <property type="entry name" value="S1_IF1"/>
    <property type="match status" value="1"/>
</dbReference>
<dbReference type="FunFam" id="2.40.50.140:FF:000019">
    <property type="entry name" value="Translation initiation factor IF-1, chloroplastic"/>
    <property type="match status" value="1"/>
</dbReference>
<dbReference type="Gene3D" id="2.40.50.140">
    <property type="entry name" value="Nucleic acid-binding proteins"/>
    <property type="match status" value="1"/>
</dbReference>
<dbReference type="HAMAP" id="MF_00075">
    <property type="entry name" value="IF_1"/>
    <property type="match status" value="1"/>
</dbReference>
<dbReference type="InterPro" id="IPR012340">
    <property type="entry name" value="NA-bd_OB-fold"/>
</dbReference>
<dbReference type="InterPro" id="IPR006196">
    <property type="entry name" value="RNA-binding_domain_S1_IF1"/>
</dbReference>
<dbReference type="InterPro" id="IPR003029">
    <property type="entry name" value="S1_domain"/>
</dbReference>
<dbReference type="InterPro" id="IPR004368">
    <property type="entry name" value="TIF_IF1"/>
</dbReference>
<dbReference type="NCBIfam" id="TIGR00008">
    <property type="entry name" value="infA"/>
    <property type="match status" value="1"/>
</dbReference>
<dbReference type="PANTHER" id="PTHR33370">
    <property type="entry name" value="TRANSLATION INITIATION FACTOR IF-1, CHLOROPLASTIC"/>
    <property type="match status" value="1"/>
</dbReference>
<dbReference type="PANTHER" id="PTHR33370:SF1">
    <property type="entry name" value="TRANSLATION INITIATION FACTOR IF-1, CHLOROPLASTIC"/>
    <property type="match status" value="1"/>
</dbReference>
<dbReference type="Pfam" id="PF01176">
    <property type="entry name" value="eIF-1a"/>
    <property type="match status" value="1"/>
</dbReference>
<dbReference type="SMART" id="SM00316">
    <property type="entry name" value="S1"/>
    <property type="match status" value="1"/>
</dbReference>
<dbReference type="SUPFAM" id="SSF50249">
    <property type="entry name" value="Nucleic acid-binding proteins"/>
    <property type="match status" value="1"/>
</dbReference>
<dbReference type="PROSITE" id="PS50832">
    <property type="entry name" value="S1_IF1_TYPE"/>
    <property type="match status" value="1"/>
</dbReference>
<feature type="chain" id="PRO_0000338966" description="Translation initiation factor IF-1, chloroplastic">
    <location>
        <begin position="1"/>
        <end position="77"/>
    </location>
</feature>
<feature type="domain" description="S1-like" evidence="1">
    <location>
        <begin position="1"/>
        <end position="71"/>
    </location>
</feature>
<gene>
    <name evidence="1" type="primary">infA</name>
</gene>